<sequence>MAVPAFSDIAKSANDLLNKDFYHLAAGTIEVKSNTPNNVAFKVTGKSTHDKVTSGALEGKFTDKPNGLTVTQTWNTANALETKVEMADNLAKGLKAEGIFSFLPATNARGAKFNLHFKQSNFHGRAFFDLLKGPTANIDAIVGHEGFLAGASAGYDVQKAAITGYSAAVGYHAPTYSAAITATDNLSVFSASYYHKVNSQVEAGSKATWNSKTGNTVGLEVATKYRIDPVSFVKGKINDRGVAAIAYNVLLREGVTLGVGASFDTQKLDQATHKVGTSFTFES</sequence>
<evidence type="ECO:0000305" key="1"/>
<accession>P07144</accession>
<accession>Q7RVC5</accession>
<gene>
    <name type="ORF">B7H23.070</name>
    <name type="ORF">NCU04304</name>
</gene>
<reference key="1">
    <citation type="journal article" date="1987" name="EMBO J.">
        <title>Mitochondrial porin of Neurospora crassa: cDNA cloning, in vitro expression and import into mitochondria.</title>
        <authorList>
            <person name="Kleene R."/>
            <person name="Pfanner N."/>
            <person name="Pfaller R."/>
            <person name="Link T.A."/>
            <person name="Sebald W."/>
            <person name="Neupert W."/>
            <person name="Tropschug M."/>
        </authorList>
    </citation>
    <scope>NUCLEOTIDE SEQUENCE [MRNA]</scope>
</reference>
<reference key="2">
    <citation type="journal article" date="2003" name="Nucleic Acids Res.">
        <title>What's in the genome of a filamentous fungus? Analysis of the Neurospora genome sequence.</title>
        <authorList>
            <person name="Mannhaupt G."/>
            <person name="Montrone C."/>
            <person name="Haase D."/>
            <person name="Mewes H.-W."/>
            <person name="Aign V."/>
            <person name="Hoheisel J.D."/>
            <person name="Fartmann B."/>
            <person name="Nyakatura G."/>
            <person name="Kempken F."/>
            <person name="Maier J."/>
            <person name="Schulte U."/>
        </authorList>
    </citation>
    <scope>NUCLEOTIDE SEQUENCE [LARGE SCALE GENOMIC DNA]</scope>
    <source>
        <strain>ATCC 24698 / 74-OR23-1A / CBS 708.71 / DSM 1257 / FGSC 987</strain>
    </source>
</reference>
<reference key="3">
    <citation type="journal article" date="2003" name="Nature">
        <title>The genome sequence of the filamentous fungus Neurospora crassa.</title>
        <authorList>
            <person name="Galagan J.E."/>
            <person name="Calvo S.E."/>
            <person name="Borkovich K.A."/>
            <person name="Selker E.U."/>
            <person name="Read N.D."/>
            <person name="Jaffe D.B."/>
            <person name="FitzHugh W."/>
            <person name="Ma L.-J."/>
            <person name="Smirnov S."/>
            <person name="Purcell S."/>
            <person name="Rehman B."/>
            <person name="Elkins T."/>
            <person name="Engels R."/>
            <person name="Wang S."/>
            <person name="Nielsen C.B."/>
            <person name="Butler J."/>
            <person name="Endrizzi M."/>
            <person name="Qui D."/>
            <person name="Ianakiev P."/>
            <person name="Bell-Pedersen D."/>
            <person name="Nelson M.A."/>
            <person name="Werner-Washburne M."/>
            <person name="Selitrennikoff C.P."/>
            <person name="Kinsey J.A."/>
            <person name="Braun E.L."/>
            <person name="Zelter A."/>
            <person name="Schulte U."/>
            <person name="Kothe G.O."/>
            <person name="Jedd G."/>
            <person name="Mewes H.-W."/>
            <person name="Staben C."/>
            <person name="Marcotte E."/>
            <person name="Greenberg D."/>
            <person name="Roy A."/>
            <person name="Foley K."/>
            <person name="Naylor J."/>
            <person name="Stange-Thomann N."/>
            <person name="Barrett R."/>
            <person name="Gnerre S."/>
            <person name="Kamal M."/>
            <person name="Kamvysselis M."/>
            <person name="Mauceli E.W."/>
            <person name="Bielke C."/>
            <person name="Rudd S."/>
            <person name="Frishman D."/>
            <person name="Krystofova S."/>
            <person name="Rasmussen C."/>
            <person name="Metzenberg R.L."/>
            <person name="Perkins D.D."/>
            <person name="Kroken S."/>
            <person name="Cogoni C."/>
            <person name="Macino G."/>
            <person name="Catcheside D.E.A."/>
            <person name="Li W."/>
            <person name="Pratt R.J."/>
            <person name="Osmani S.A."/>
            <person name="DeSouza C.P.C."/>
            <person name="Glass N.L."/>
            <person name="Orbach M.J."/>
            <person name="Berglund J.A."/>
            <person name="Voelker R."/>
            <person name="Yarden O."/>
            <person name="Plamann M."/>
            <person name="Seiler S."/>
            <person name="Dunlap J.C."/>
            <person name="Radford A."/>
            <person name="Aramayo R."/>
            <person name="Natvig D.O."/>
            <person name="Alex L.A."/>
            <person name="Mannhaupt G."/>
            <person name="Ebbole D.J."/>
            <person name="Freitag M."/>
            <person name="Paulsen I."/>
            <person name="Sachs M.S."/>
            <person name="Lander E.S."/>
            <person name="Nusbaum C."/>
            <person name="Birren B.W."/>
        </authorList>
    </citation>
    <scope>NUCLEOTIDE SEQUENCE [LARGE SCALE GENOMIC DNA]</scope>
    <source>
        <strain>ATCC 24698 / 74-OR23-1A / CBS 708.71 / DSM 1257 / FGSC 987</strain>
    </source>
</reference>
<comment type="function">
    <text>Forms a channel through the cell membrane that allows diffusion of small hydrophilic molecules. The channel adopts an open conformation at low or zero membrane potential and a closed conformation at potentials above 30-40 mV. The open state has a weak anion selectivity whereas the closed state is cation-selective.</text>
</comment>
<comment type="subcellular location">
    <subcellularLocation>
        <location>Mitochondrion outer membrane</location>
    </subcellularLocation>
</comment>
<comment type="domain">
    <text>Consists mainly of membrane-spanning sided beta-sheets.</text>
</comment>
<comment type="similarity">
    <text evidence="1">Belongs to the eukaryotic mitochondrial porin family.</text>
</comment>
<name>VDAC_NEUCR</name>
<keyword id="KW-0406">Ion transport</keyword>
<keyword id="KW-0472">Membrane</keyword>
<keyword id="KW-0496">Mitochondrion</keyword>
<keyword id="KW-1000">Mitochondrion outer membrane</keyword>
<keyword id="KW-0626">Porin</keyword>
<keyword id="KW-1185">Reference proteome</keyword>
<keyword id="KW-0812">Transmembrane</keyword>
<keyword id="KW-1134">Transmembrane beta strand</keyword>
<keyword id="KW-0813">Transport</keyword>
<organism>
    <name type="scientific">Neurospora crassa (strain ATCC 24698 / 74-OR23-1A / CBS 708.71 / DSM 1257 / FGSC 987)</name>
    <dbReference type="NCBI Taxonomy" id="367110"/>
    <lineage>
        <taxon>Eukaryota</taxon>
        <taxon>Fungi</taxon>
        <taxon>Dikarya</taxon>
        <taxon>Ascomycota</taxon>
        <taxon>Pezizomycotina</taxon>
        <taxon>Sordariomycetes</taxon>
        <taxon>Sordariomycetidae</taxon>
        <taxon>Sordariales</taxon>
        <taxon>Sordariaceae</taxon>
        <taxon>Neurospora</taxon>
    </lineage>
</organism>
<feature type="chain" id="PRO_0000050522" description="Mitochondrial outer membrane protein porin">
    <location>
        <begin position="1"/>
        <end position="283"/>
    </location>
</feature>
<dbReference type="EMBL" id="X05824">
    <property type="protein sequence ID" value="CAA29264.1"/>
    <property type="molecule type" value="mRNA"/>
</dbReference>
<dbReference type="EMBL" id="BX294026">
    <property type="protein sequence ID" value="CAD71033.1"/>
    <property type="molecule type" value="Genomic_DNA"/>
</dbReference>
<dbReference type="EMBL" id="CM002240">
    <property type="protein sequence ID" value="EAA31714.1"/>
    <property type="molecule type" value="Genomic_DNA"/>
</dbReference>
<dbReference type="PIR" id="S07195">
    <property type="entry name" value="MMNCP"/>
</dbReference>
<dbReference type="SMR" id="P07144"/>
<dbReference type="FunCoup" id="P07144">
    <property type="interactions" value="1044"/>
</dbReference>
<dbReference type="STRING" id="367110.P07144"/>
<dbReference type="TCDB" id="1.B.8.1.20">
    <property type="family name" value="the mitochondrial and plastid porin (mpp) family"/>
</dbReference>
<dbReference type="PaxDb" id="5141-EFNCRP00000003947"/>
<dbReference type="EnsemblFungi" id="EAA31714">
    <property type="protein sequence ID" value="EAA31714"/>
    <property type="gene ID" value="NCU04304"/>
</dbReference>
<dbReference type="KEGG" id="ncr:NCU04304"/>
<dbReference type="VEuPathDB" id="FungiDB:NCU04304"/>
<dbReference type="HOGENOM" id="CLU_044399_0_0_1"/>
<dbReference type="InParanoid" id="P07144"/>
<dbReference type="OMA" id="FKQPAFH"/>
<dbReference type="OrthoDB" id="7827681at2759"/>
<dbReference type="Proteomes" id="UP000001805">
    <property type="component" value="Chromosome 2, Linkage Group V"/>
</dbReference>
<dbReference type="GO" id="GO:0005741">
    <property type="term" value="C:mitochondrial outer membrane"/>
    <property type="evidence" value="ECO:0000318"/>
    <property type="project" value="GO_Central"/>
</dbReference>
<dbReference type="GO" id="GO:0046930">
    <property type="term" value="C:pore complex"/>
    <property type="evidence" value="ECO:0007669"/>
    <property type="project" value="UniProtKB-KW"/>
</dbReference>
<dbReference type="GO" id="GO:0015288">
    <property type="term" value="F:porin activity"/>
    <property type="evidence" value="ECO:0007669"/>
    <property type="project" value="UniProtKB-KW"/>
</dbReference>
<dbReference type="GO" id="GO:0008308">
    <property type="term" value="F:voltage-gated monoatomic anion channel activity"/>
    <property type="evidence" value="ECO:0000318"/>
    <property type="project" value="GO_Central"/>
</dbReference>
<dbReference type="CDD" id="cd07306">
    <property type="entry name" value="Porin3_VDAC"/>
    <property type="match status" value="1"/>
</dbReference>
<dbReference type="FunFam" id="2.40.160.10:FF:000004">
    <property type="entry name" value="Por1 mitochondrial outer membrane porin"/>
    <property type="match status" value="1"/>
</dbReference>
<dbReference type="Gene3D" id="2.40.160.10">
    <property type="entry name" value="Porin"/>
    <property type="match status" value="1"/>
</dbReference>
<dbReference type="InterPro" id="IPR023614">
    <property type="entry name" value="Porin_dom_sf"/>
</dbReference>
<dbReference type="InterPro" id="IPR001925">
    <property type="entry name" value="Porin_Euk"/>
</dbReference>
<dbReference type="InterPro" id="IPR027246">
    <property type="entry name" value="Porin_Euk/Tom40"/>
</dbReference>
<dbReference type="PANTHER" id="PTHR11743:SF70">
    <property type="entry name" value="GH26960P-RELATED"/>
    <property type="match status" value="1"/>
</dbReference>
<dbReference type="PANTHER" id="PTHR11743">
    <property type="entry name" value="VOLTAGE-DEPENDENT ANION-SELECTIVE CHANNEL"/>
    <property type="match status" value="1"/>
</dbReference>
<dbReference type="Pfam" id="PF01459">
    <property type="entry name" value="Porin_3"/>
    <property type="match status" value="1"/>
</dbReference>
<dbReference type="PRINTS" id="PR00185">
    <property type="entry name" value="EUKARYTPORIN"/>
</dbReference>
<dbReference type="PROSITE" id="PS00558">
    <property type="entry name" value="EUKARYOTIC_PORIN"/>
    <property type="match status" value="1"/>
</dbReference>
<proteinExistence type="evidence at transcript level"/>
<protein>
    <recommendedName>
        <fullName>Mitochondrial outer membrane protein porin</fullName>
    </recommendedName>
</protein>